<dbReference type="EMBL" id="CP001014">
    <property type="protein sequence ID" value="ACB40134.1"/>
    <property type="molecule type" value="Genomic_DNA"/>
</dbReference>
<dbReference type="RefSeq" id="WP_012350553.1">
    <property type="nucleotide sequence ID" value="NC_010525.1"/>
</dbReference>
<dbReference type="SMR" id="B1Y8Q5"/>
<dbReference type="STRING" id="444157.Tneu_1207"/>
<dbReference type="GeneID" id="6165337"/>
<dbReference type="KEGG" id="tne:Tneu_1207"/>
<dbReference type="eggNOG" id="arCOG04086">
    <property type="taxonomic scope" value="Archaea"/>
</dbReference>
<dbReference type="HOGENOM" id="CLU_055156_6_0_2"/>
<dbReference type="OrthoDB" id="6379at2157"/>
<dbReference type="Proteomes" id="UP000001694">
    <property type="component" value="Chromosome"/>
</dbReference>
<dbReference type="GO" id="GO:0022625">
    <property type="term" value="C:cytosolic large ribosomal subunit"/>
    <property type="evidence" value="ECO:0007669"/>
    <property type="project" value="TreeGrafter"/>
</dbReference>
<dbReference type="GO" id="GO:0003723">
    <property type="term" value="F:RNA binding"/>
    <property type="evidence" value="ECO:0007669"/>
    <property type="project" value="TreeGrafter"/>
</dbReference>
<dbReference type="GO" id="GO:0003735">
    <property type="term" value="F:structural constituent of ribosome"/>
    <property type="evidence" value="ECO:0007669"/>
    <property type="project" value="InterPro"/>
</dbReference>
<dbReference type="GO" id="GO:0000463">
    <property type="term" value="P:maturation of LSU-rRNA from tricistronic rRNA transcript (SSU-rRNA, 5.8S rRNA, LSU-rRNA)"/>
    <property type="evidence" value="ECO:0007669"/>
    <property type="project" value="TreeGrafter"/>
</dbReference>
<dbReference type="GO" id="GO:0006412">
    <property type="term" value="P:translation"/>
    <property type="evidence" value="ECO:0007669"/>
    <property type="project" value="UniProtKB-UniRule"/>
</dbReference>
<dbReference type="CDD" id="cd01657">
    <property type="entry name" value="Ribosomal_L7_archeal_euk"/>
    <property type="match status" value="1"/>
</dbReference>
<dbReference type="Gene3D" id="1.10.15.30">
    <property type="match status" value="1"/>
</dbReference>
<dbReference type="Gene3D" id="3.30.1390.20">
    <property type="entry name" value="Ribosomal protein L30, ferredoxin-like fold domain"/>
    <property type="match status" value="1"/>
</dbReference>
<dbReference type="HAMAP" id="MF_01371_A">
    <property type="entry name" value="Ribosomal_uL30_A"/>
    <property type="match status" value="1"/>
</dbReference>
<dbReference type="InterPro" id="IPR036919">
    <property type="entry name" value="Ribo_uL30_ferredoxin-like_sf"/>
</dbReference>
<dbReference type="InterPro" id="IPR039699">
    <property type="entry name" value="Ribosomal_uL30"/>
</dbReference>
<dbReference type="InterPro" id="IPR005997">
    <property type="entry name" value="Ribosomal_uL30_arc"/>
</dbReference>
<dbReference type="InterPro" id="IPR035808">
    <property type="entry name" value="Ribosomal_uL30_euk_arc"/>
</dbReference>
<dbReference type="InterPro" id="IPR016082">
    <property type="entry name" value="Ribosomal_uL30_ferredoxin-like"/>
</dbReference>
<dbReference type="NCBIfam" id="NF004711">
    <property type="entry name" value="PRK06049.1"/>
    <property type="match status" value="1"/>
</dbReference>
<dbReference type="PANTHER" id="PTHR11524">
    <property type="entry name" value="60S RIBOSOMAL PROTEIN L7"/>
    <property type="match status" value="1"/>
</dbReference>
<dbReference type="PANTHER" id="PTHR11524:SF16">
    <property type="entry name" value="LARGE RIBOSOMAL SUBUNIT PROTEIN UL30"/>
    <property type="match status" value="1"/>
</dbReference>
<dbReference type="Pfam" id="PF00327">
    <property type="entry name" value="Ribosomal_L30"/>
    <property type="match status" value="1"/>
</dbReference>
<dbReference type="SUPFAM" id="SSF55129">
    <property type="entry name" value="Ribosomal protein L30p/L7e"/>
    <property type="match status" value="1"/>
</dbReference>
<feature type="chain" id="PRO_0000347175" description="Large ribosomal subunit protein uL30">
    <location>
        <begin position="1"/>
        <end position="175"/>
    </location>
</feature>
<evidence type="ECO:0000255" key="1">
    <source>
        <dbReference type="HAMAP-Rule" id="MF_01371"/>
    </source>
</evidence>
<evidence type="ECO:0000305" key="2"/>
<comment type="subunit">
    <text evidence="1">Part of the 50S ribosomal subunit.</text>
</comment>
<comment type="similarity">
    <text evidence="1">Belongs to the universal ribosomal protein uL30 family.</text>
</comment>
<organism>
    <name type="scientific">Pyrobaculum neutrophilum (strain DSM 2338 / JCM 9278 / NBRC 100436 / V24Sta)</name>
    <name type="common">Thermoproteus neutrophilus</name>
    <dbReference type="NCBI Taxonomy" id="444157"/>
    <lineage>
        <taxon>Archaea</taxon>
        <taxon>Thermoproteota</taxon>
        <taxon>Thermoprotei</taxon>
        <taxon>Thermoproteales</taxon>
        <taxon>Thermoproteaceae</taxon>
        <taxon>Pyrobaculum</taxon>
    </lineage>
</organism>
<sequence>MIAKVVYPRYAVIRLRGIPTTPRDIAATLDLLRLRRKFTMTVVVGSPDVLGMIEKANDWITWGEIDANTLAEVLKRRGRLVGDRPLTLEHLQRWGWRSFEEVALAFVAGEIDRLSCGRKVPAREGQRAPCIPYLKPFFRLHPPRGGLNSLKLHFSVGGDLGYRGPLINDLIRRML</sequence>
<reference key="1">
    <citation type="submission" date="2008-03" db="EMBL/GenBank/DDBJ databases">
        <title>Complete sequence of Thermoproteus neutrophilus V24Sta.</title>
        <authorList>
            <consortium name="US DOE Joint Genome Institute"/>
            <person name="Copeland A."/>
            <person name="Lucas S."/>
            <person name="Lapidus A."/>
            <person name="Glavina del Rio T."/>
            <person name="Dalin E."/>
            <person name="Tice H."/>
            <person name="Bruce D."/>
            <person name="Goodwin L."/>
            <person name="Pitluck S."/>
            <person name="Sims D."/>
            <person name="Brettin T."/>
            <person name="Detter J.C."/>
            <person name="Han C."/>
            <person name="Kuske C.R."/>
            <person name="Schmutz J."/>
            <person name="Larimer F."/>
            <person name="Land M."/>
            <person name="Hauser L."/>
            <person name="Kyrpides N."/>
            <person name="Mikhailova N."/>
            <person name="Biddle J.F."/>
            <person name="Zhang Z."/>
            <person name="Fitz-Gibbon S.T."/>
            <person name="Lowe T.M."/>
            <person name="Saltikov C."/>
            <person name="House C.H."/>
            <person name="Richardson P."/>
        </authorList>
    </citation>
    <scope>NUCLEOTIDE SEQUENCE [LARGE SCALE GENOMIC DNA]</scope>
    <source>
        <strain>DSM 2338 / JCM 9278 / NBRC 100436 / V24Sta</strain>
    </source>
</reference>
<proteinExistence type="inferred from homology"/>
<gene>
    <name evidence="1" type="primary">rpl30</name>
    <name type="ordered locus">Tneu_1207</name>
</gene>
<accession>B1Y8Q5</accession>
<name>RL30_PYRNV</name>
<protein>
    <recommendedName>
        <fullName evidence="1">Large ribosomal subunit protein uL30</fullName>
    </recommendedName>
    <alternativeName>
        <fullName evidence="2">50S ribosomal protein L30</fullName>
    </alternativeName>
</protein>
<keyword id="KW-0687">Ribonucleoprotein</keyword>
<keyword id="KW-0689">Ribosomal protein</keyword>